<gene>
    <name evidence="1" type="primary">yhbP</name>
    <name type="ordered locus">STY3453</name>
    <name type="ordered locus">t3190</name>
</gene>
<evidence type="ECO:0000255" key="1">
    <source>
        <dbReference type="HAMAP-Rule" id="MF_00764"/>
    </source>
</evidence>
<reference key="1">
    <citation type="journal article" date="2001" name="Nature">
        <title>Complete genome sequence of a multiple drug resistant Salmonella enterica serovar Typhi CT18.</title>
        <authorList>
            <person name="Parkhill J."/>
            <person name="Dougan G."/>
            <person name="James K.D."/>
            <person name="Thomson N.R."/>
            <person name="Pickard D."/>
            <person name="Wain J."/>
            <person name="Churcher C.M."/>
            <person name="Mungall K.L."/>
            <person name="Bentley S.D."/>
            <person name="Holden M.T.G."/>
            <person name="Sebaihia M."/>
            <person name="Baker S."/>
            <person name="Basham D."/>
            <person name="Brooks K."/>
            <person name="Chillingworth T."/>
            <person name="Connerton P."/>
            <person name="Cronin A."/>
            <person name="Davis P."/>
            <person name="Davies R.M."/>
            <person name="Dowd L."/>
            <person name="White N."/>
            <person name="Farrar J."/>
            <person name="Feltwell T."/>
            <person name="Hamlin N."/>
            <person name="Haque A."/>
            <person name="Hien T.T."/>
            <person name="Holroyd S."/>
            <person name="Jagels K."/>
            <person name="Krogh A."/>
            <person name="Larsen T.S."/>
            <person name="Leather S."/>
            <person name="Moule S."/>
            <person name="O'Gaora P."/>
            <person name="Parry C."/>
            <person name="Quail M.A."/>
            <person name="Rutherford K.M."/>
            <person name="Simmonds M."/>
            <person name="Skelton J."/>
            <person name="Stevens K."/>
            <person name="Whitehead S."/>
            <person name="Barrell B.G."/>
        </authorList>
    </citation>
    <scope>NUCLEOTIDE SEQUENCE [LARGE SCALE GENOMIC DNA]</scope>
    <source>
        <strain>CT18</strain>
    </source>
</reference>
<reference key="2">
    <citation type="journal article" date="2003" name="J. Bacteriol.">
        <title>Comparative genomics of Salmonella enterica serovar Typhi strains Ty2 and CT18.</title>
        <authorList>
            <person name="Deng W."/>
            <person name="Liou S.-R."/>
            <person name="Plunkett G. III"/>
            <person name="Mayhew G.F."/>
            <person name="Rose D.J."/>
            <person name="Burland V."/>
            <person name="Kodoyianni V."/>
            <person name="Schwartz D.C."/>
            <person name="Blattner F.R."/>
        </authorList>
    </citation>
    <scope>NUCLEOTIDE SEQUENCE [LARGE SCALE GENOMIC DNA]</scope>
    <source>
        <strain>ATCC 700931 / Ty2</strain>
    </source>
</reference>
<proteinExistence type="inferred from homology"/>
<protein>
    <recommendedName>
        <fullName evidence="1">UPF0306 protein YhbP</fullName>
    </recommendedName>
</protein>
<sequence>MDTLTAIGRWLAKQHVVTWCVHHEGELWCANAFYLFDAQNVALYLLTDDKTRHAQMSGACAPVAGTVNGQPKTVARIRGVQFKGEIRRLEGQESDAARKAYLRRFPVARVLPAPVWEIRLDEIKFTDNTLGFGKKLHWLRDSRAQQA</sequence>
<organism>
    <name type="scientific">Salmonella typhi</name>
    <dbReference type="NCBI Taxonomy" id="90370"/>
    <lineage>
        <taxon>Bacteria</taxon>
        <taxon>Pseudomonadati</taxon>
        <taxon>Pseudomonadota</taxon>
        <taxon>Gammaproteobacteria</taxon>
        <taxon>Enterobacterales</taxon>
        <taxon>Enterobacteriaceae</taxon>
        <taxon>Salmonella</taxon>
    </lineage>
</organism>
<dbReference type="EMBL" id="AL513382">
    <property type="protein sequence ID" value="CAD07792.1"/>
    <property type="molecule type" value="Genomic_DNA"/>
</dbReference>
<dbReference type="EMBL" id="AE014613">
    <property type="protein sequence ID" value="AAO70728.1"/>
    <property type="molecule type" value="Genomic_DNA"/>
</dbReference>
<dbReference type="RefSeq" id="NP_457654.1">
    <property type="nucleotide sequence ID" value="NC_003198.1"/>
</dbReference>
<dbReference type="RefSeq" id="WP_000380404.1">
    <property type="nucleotide sequence ID" value="NZ_WSUR01000003.1"/>
</dbReference>
<dbReference type="SMR" id="P60821"/>
<dbReference type="STRING" id="220341.gene:17587303"/>
<dbReference type="KEGG" id="stt:t3190"/>
<dbReference type="KEGG" id="sty:STY3453"/>
<dbReference type="PATRIC" id="fig|220341.7.peg.3515"/>
<dbReference type="eggNOG" id="COG3787">
    <property type="taxonomic scope" value="Bacteria"/>
</dbReference>
<dbReference type="HOGENOM" id="CLU_105087_3_0_6"/>
<dbReference type="OMA" id="DLWCANC"/>
<dbReference type="OrthoDB" id="8447155at2"/>
<dbReference type="Proteomes" id="UP000000541">
    <property type="component" value="Chromosome"/>
</dbReference>
<dbReference type="Proteomes" id="UP000002670">
    <property type="component" value="Chromosome"/>
</dbReference>
<dbReference type="Gene3D" id="2.30.110.10">
    <property type="entry name" value="Electron Transport, Fmn-binding Protein, Chain A"/>
    <property type="match status" value="1"/>
</dbReference>
<dbReference type="HAMAP" id="MF_00764">
    <property type="entry name" value="UPF0306"/>
    <property type="match status" value="1"/>
</dbReference>
<dbReference type="InterPro" id="IPR012349">
    <property type="entry name" value="Split_barrel_FMN-bd"/>
</dbReference>
<dbReference type="InterPro" id="IPR011194">
    <property type="entry name" value="UPF0306"/>
</dbReference>
<dbReference type="NCBIfam" id="NF002900">
    <property type="entry name" value="PRK03467.1"/>
    <property type="match status" value="1"/>
</dbReference>
<dbReference type="PIRSF" id="PIRSF009554">
    <property type="entry name" value="UCP009554"/>
    <property type="match status" value="1"/>
</dbReference>
<dbReference type="SUPFAM" id="SSF50475">
    <property type="entry name" value="FMN-binding split barrel"/>
    <property type="match status" value="1"/>
</dbReference>
<accession>P60821</accession>
<accession>Q8XEW3</accession>
<name>YHBP_SALTI</name>
<comment type="similarity">
    <text evidence="1">Belongs to the UPF0306 family.</text>
</comment>
<feature type="chain" id="PRO_0000214872" description="UPF0306 protein YhbP">
    <location>
        <begin position="1"/>
        <end position="147"/>
    </location>
</feature>